<name>CAPP_YERPN</name>
<organism>
    <name type="scientific">Yersinia pestis bv. Antiqua (strain Nepal516)</name>
    <dbReference type="NCBI Taxonomy" id="377628"/>
    <lineage>
        <taxon>Bacteria</taxon>
        <taxon>Pseudomonadati</taxon>
        <taxon>Pseudomonadota</taxon>
        <taxon>Gammaproteobacteria</taxon>
        <taxon>Enterobacterales</taxon>
        <taxon>Yersiniaceae</taxon>
        <taxon>Yersinia</taxon>
    </lineage>
</organism>
<reference key="1">
    <citation type="journal article" date="2006" name="J. Bacteriol.">
        <title>Complete genome sequence of Yersinia pestis strains Antiqua and Nepal516: evidence of gene reduction in an emerging pathogen.</title>
        <authorList>
            <person name="Chain P.S.G."/>
            <person name="Hu P."/>
            <person name="Malfatti S.A."/>
            <person name="Radnedge L."/>
            <person name="Larimer F."/>
            <person name="Vergez L.M."/>
            <person name="Worsham P."/>
            <person name="Chu M.C."/>
            <person name="Andersen G.L."/>
        </authorList>
    </citation>
    <scope>NUCLEOTIDE SEQUENCE [LARGE SCALE GENOMIC DNA]</scope>
    <source>
        <strain>Nepal516</strain>
    </source>
</reference>
<reference key="2">
    <citation type="submission" date="2009-04" db="EMBL/GenBank/DDBJ databases">
        <title>Yersinia pestis Nepal516A whole genome shotgun sequencing project.</title>
        <authorList>
            <person name="Plunkett G. III"/>
            <person name="Anderson B.D."/>
            <person name="Baumler D.J."/>
            <person name="Burland V."/>
            <person name="Cabot E.L."/>
            <person name="Glasner J.D."/>
            <person name="Mau B."/>
            <person name="Neeno-Eckwall E."/>
            <person name="Perna N.T."/>
            <person name="Munk A.C."/>
            <person name="Tapia R."/>
            <person name="Green L.D."/>
            <person name="Rogers Y.C."/>
            <person name="Detter J.C."/>
            <person name="Bruce D.C."/>
            <person name="Brettin T.S."/>
        </authorList>
    </citation>
    <scope>NUCLEOTIDE SEQUENCE [LARGE SCALE GENOMIC DNA]</scope>
    <source>
        <strain>Nepal516</strain>
    </source>
</reference>
<evidence type="ECO:0000255" key="1">
    <source>
        <dbReference type="HAMAP-Rule" id="MF_00595"/>
    </source>
</evidence>
<accession>Q1CNQ7</accession>
<accession>D1Q358</accession>
<comment type="function">
    <text evidence="1">Forms oxaloacetate, a four-carbon dicarboxylic acid source for the tricarboxylic acid cycle.</text>
</comment>
<comment type="catalytic activity">
    <reaction evidence="1">
        <text>oxaloacetate + phosphate = phosphoenolpyruvate + hydrogencarbonate</text>
        <dbReference type="Rhea" id="RHEA:28370"/>
        <dbReference type="ChEBI" id="CHEBI:16452"/>
        <dbReference type="ChEBI" id="CHEBI:17544"/>
        <dbReference type="ChEBI" id="CHEBI:43474"/>
        <dbReference type="ChEBI" id="CHEBI:58702"/>
        <dbReference type="EC" id="4.1.1.31"/>
    </reaction>
</comment>
<comment type="cofactor">
    <cofactor evidence="1">
        <name>Mg(2+)</name>
        <dbReference type="ChEBI" id="CHEBI:18420"/>
    </cofactor>
</comment>
<comment type="similarity">
    <text evidence="1">Belongs to the PEPCase type 1 family.</text>
</comment>
<gene>
    <name evidence="1" type="primary">ppc</name>
    <name type="ordered locus">YPN_0040</name>
    <name type="ORF">YP516_4578</name>
</gene>
<keyword id="KW-0120">Carbon dioxide fixation</keyword>
<keyword id="KW-0456">Lyase</keyword>
<keyword id="KW-0460">Magnesium</keyword>
<proteinExistence type="inferred from homology"/>
<feature type="chain" id="PRO_1000025606" description="Phosphoenolpyruvate carboxylase">
    <location>
        <begin position="1"/>
        <end position="878"/>
    </location>
</feature>
<feature type="active site" evidence="1">
    <location>
        <position position="137"/>
    </location>
</feature>
<feature type="active site" evidence="1">
    <location>
        <position position="545"/>
    </location>
</feature>
<dbReference type="EC" id="4.1.1.31" evidence="1"/>
<dbReference type="EMBL" id="CP000305">
    <property type="protein sequence ID" value="ABG16373.1"/>
    <property type="molecule type" value="Genomic_DNA"/>
</dbReference>
<dbReference type="EMBL" id="ACNQ01000019">
    <property type="protein sequence ID" value="EEO74961.1"/>
    <property type="molecule type" value="Genomic_DNA"/>
</dbReference>
<dbReference type="RefSeq" id="WP_002209491.1">
    <property type="nucleotide sequence ID" value="NZ_ACNQ01000019.1"/>
</dbReference>
<dbReference type="SMR" id="Q1CNQ7"/>
<dbReference type="GeneID" id="57974773"/>
<dbReference type="KEGG" id="ypn:YPN_0040"/>
<dbReference type="HOGENOM" id="CLU_006557_2_0_6"/>
<dbReference type="Proteomes" id="UP000008936">
    <property type="component" value="Chromosome"/>
</dbReference>
<dbReference type="GO" id="GO:0005829">
    <property type="term" value="C:cytosol"/>
    <property type="evidence" value="ECO:0007669"/>
    <property type="project" value="TreeGrafter"/>
</dbReference>
<dbReference type="GO" id="GO:0000287">
    <property type="term" value="F:magnesium ion binding"/>
    <property type="evidence" value="ECO:0007669"/>
    <property type="project" value="UniProtKB-UniRule"/>
</dbReference>
<dbReference type="GO" id="GO:0008964">
    <property type="term" value="F:phosphoenolpyruvate carboxylase activity"/>
    <property type="evidence" value="ECO:0007669"/>
    <property type="project" value="UniProtKB-UniRule"/>
</dbReference>
<dbReference type="GO" id="GO:0015977">
    <property type="term" value="P:carbon fixation"/>
    <property type="evidence" value="ECO:0007669"/>
    <property type="project" value="UniProtKB-UniRule"/>
</dbReference>
<dbReference type="GO" id="GO:0006107">
    <property type="term" value="P:oxaloacetate metabolic process"/>
    <property type="evidence" value="ECO:0007669"/>
    <property type="project" value="UniProtKB-UniRule"/>
</dbReference>
<dbReference type="GO" id="GO:0006099">
    <property type="term" value="P:tricarboxylic acid cycle"/>
    <property type="evidence" value="ECO:0007669"/>
    <property type="project" value="InterPro"/>
</dbReference>
<dbReference type="FunFam" id="1.20.1440.90:FF:000002">
    <property type="entry name" value="Phosphoenolpyruvate carboxylase"/>
    <property type="match status" value="1"/>
</dbReference>
<dbReference type="Gene3D" id="1.20.1440.90">
    <property type="entry name" value="Phosphoenolpyruvate/pyruvate domain"/>
    <property type="match status" value="1"/>
</dbReference>
<dbReference type="HAMAP" id="MF_00595">
    <property type="entry name" value="PEPcase_type1"/>
    <property type="match status" value="1"/>
</dbReference>
<dbReference type="InterPro" id="IPR021135">
    <property type="entry name" value="PEP_COase"/>
</dbReference>
<dbReference type="InterPro" id="IPR022805">
    <property type="entry name" value="PEP_COase_bac/pln-type"/>
</dbReference>
<dbReference type="InterPro" id="IPR018129">
    <property type="entry name" value="PEP_COase_Lys_AS"/>
</dbReference>
<dbReference type="InterPro" id="IPR033129">
    <property type="entry name" value="PEPCASE_His_AS"/>
</dbReference>
<dbReference type="InterPro" id="IPR015813">
    <property type="entry name" value="Pyrv/PenolPyrv_kinase-like_dom"/>
</dbReference>
<dbReference type="NCBIfam" id="NF000584">
    <property type="entry name" value="PRK00009.1"/>
    <property type="match status" value="1"/>
</dbReference>
<dbReference type="PANTHER" id="PTHR30523">
    <property type="entry name" value="PHOSPHOENOLPYRUVATE CARBOXYLASE"/>
    <property type="match status" value="1"/>
</dbReference>
<dbReference type="PANTHER" id="PTHR30523:SF6">
    <property type="entry name" value="PHOSPHOENOLPYRUVATE CARBOXYLASE"/>
    <property type="match status" value="1"/>
</dbReference>
<dbReference type="Pfam" id="PF00311">
    <property type="entry name" value="PEPcase"/>
    <property type="match status" value="1"/>
</dbReference>
<dbReference type="PRINTS" id="PR00150">
    <property type="entry name" value="PEPCARBXLASE"/>
</dbReference>
<dbReference type="SUPFAM" id="SSF51621">
    <property type="entry name" value="Phosphoenolpyruvate/pyruvate domain"/>
    <property type="match status" value="1"/>
</dbReference>
<dbReference type="PROSITE" id="PS00781">
    <property type="entry name" value="PEPCASE_1"/>
    <property type="match status" value="1"/>
</dbReference>
<dbReference type="PROSITE" id="PS00393">
    <property type="entry name" value="PEPCASE_2"/>
    <property type="match status" value="1"/>
</dbReference>
<sequence length="878" mass="98324">MNEQYSAMRSNVSMLGTLLGDTIKEALGEHILDRVETIRKLSKSSRAGNEASRQELLTTLQNLSNDELLPVARAFSQFLNLTNTAEQYHSISPHGEAASNPEALAQLFTRLKDKKLSDQDMRSAVDDLSIELVLTAHPTEITRRTLIHKLVEVNTCLSQLDHNDLADYERNKIMRRLRQLVAQSWHTDEIRKLRPSPVDEAKWGFAVVENSLWEGVPAFLREFNEQLENSLDYRLPVEAVPIRFTSWMGGDRDGNPNVTAEITRHVLLLSRWKATDLFLRDIQVLVSELSMSECTPELRELAGGEEVLEPYRQLMKNVRTQLTNTQAYLEARLKGERVLPPHDLLVSNDQLWEPLYACYQSLKACGMEIIANGQLLDTLRRVRCFGVPLVRIDVRQESTRHTDAIAELTRYLGLGDYESWSESDKQAFLVRELNSKRPLVPLKWEPSAETQEVLETCRVIAEAPQGSIAAYVISMAKVPSDVLAVHLLLKEAGCPFTLPVAPLFETLDDLNNADDVMTQLLGIDWYRGLIQGKQMVMIGYSDSAKDAGVMAASWAQYRAQDALIKTCEKAGITLTLFHGRGGSIGRGGAPAHAALLSQPPGSLKGGLRVTEQGEMIRFKFGLPEVTISSLALYAGAILEANLLPPPEPKKEWIEVMDLLSDASCDMYRSYVRENPEFVRYFRAATPELELGKLPLGSRPAKRRPDGGVESLRAIPWIFAWTQNRLMLPAWLGAGAGLQRAIDAGKQDVLATMCRDWPFFSTRIGMLEMVFAKADLWLAEYYDQRLVDKSLWPLGQQLRDQLAADIKVVLAIANDDHLMADLPWIAESIALRNVYTDPLNVLQAELLHRSRQQEHPDACVEQALMVTIAGVAAGMRNTG</sequence>
<protein>
    <recommendedName>
        <fullName evidence="1">Phosphoenolpyruvate carboxylase</fullName>
        <shortName evidence="1">PEPC</shortName>
        <shortName evidence="1">PEPCase</shortName>
        <ecNumber evidence="1">4.1.1.31</ecNumber>
    </recommendedName>
</protein>